<comment type="function">
    <text evidence="1">F(1)F(0) ATP synthase produces ATP from ADP in the presence of a proton or sodium gradient. F-type ATPases consist of two structural domains, F(1) containing the extramembraneous catalytic core and F(0) containing the membrane proton channel, linked together by a central stalk and a peripheral stalk. During catalysis, ATP synthesis in the catalytic domain of F(1) is coupled via a rotary mechanism of the central stalk subunits to proton translocation.</text>
</comment>
<comment type="function">
    <text evidence="1">Component of the F(0) channel, it forms part of the peripheral stalk, linking F(1) to F(0).</text>
</comment>
<comment type="subunit">
    <text evidence="1">F-type ATPases have 2 components, F(1) - the catalytic core - and F(0) - the membrane proton channel. F(1) has five subunits: alpha(3), beta(3), gamma(1), delta(1), epsilon(1). F(0) has three main subunits: a(1), b(2) and c(10-14). The alpha and beta chains form an alternating ring which encloses part of the gamma chain. F(1) is attached to F(0) by a central stalk formed by the gamma and epsilon chains, while a peripheral stalk is formed by the delta and b chains.</text>
</comment>
<comment type="subcellular location">
    <subcellularLocation>
        <location evidence="1">Cell membrane</location>
        <topology evidence="1">Single-pass membrane protein</topology>
    </subcellularLocation>
</comment>
<comment type="similarity">
    <text evidence="1">Belongs to the ATPase B chain family.</text>
</comment>
<protein>
    <recommendedName>
        <fullName evidence="1">ATP synthase subunit b</fullName>
    </recommendedName>
    <alternativeName>
        <fullName evidence="1">ATP synthase F(0) sector subunit b</fullName>
    </alternativeName>
    <alternativeName>
        <fullName evidence="1">ATPase subunit I</fullName>
    </alternativeName>
    <alternativeName>
        <fullName evidence="1">F-type ATPase subunit b</fullName>
        <shortName evidence="1">F-ATPase subunit b</shortName>
    </alternativeName>
</protein>
<feature type="chain" id="PRO_0000368324" description="ATP synthase subunit b">
    <location>
        <begin position="1"/>
        <end position="168"/>
    </location>
</feature>
<feature type="transmembrane region" description="Helical" evidence="1">
    <location>
        <begin position="9"/>
        <end position="29"/>
    </location>
</feature>
<evidence type="ECO:0000255" key="1">
    <source>
        <dbReference type="HAMAP-Rule" id="MF_01398"/>
    </source>
</evidence>
<accession>B7JGN4</accession>
<sequence>MPTLLLGAAIPFGTIAYTLFIFLLLLVMLRKFAWGPLMGIMKEREEHVANEIDAAERNNAEAKKLVEEQREMLKQSRVEAQELIERAKKQAVDQKDVIVAAAKEEAESIKASAVQEIQREKEQAIAALQEQVASLSVQIASKVIEKELKEEDQVKLIRDYIKEVGEAR</sequence>
<organism>
    <name type="scientific">Bacillus cereus (strain AH820)</name>
    <dbReference type="NCBI Taxonomy" id="405535"/>
    <lineage>
        <taxon>Bacteria</taxon>
        <taxon>Bacillati</taxon>
        <taxon>Bacillota</taxon>
        <taxon>Bacilli</taxon>
        <taxon>Bacillales</taxon>
        <taxon>Bacillaceae</taxon>
        <taxon>Bacillus</taxon>
        <taxon>Bacillus cereus group</taxon>
    </lineage>
</organism>
<keyword id="KW-0066">ATP synthesis</keyword>
<keyword id="KW-1003">Cell membrane</keyword>
<keyword id="KW-0138">CF(0)</keyword>
<keyword id="KW-0375">Hydrogen ion transport</keyword>
<keyword id="KW-0406">Ion transport</keyword>
<keyword id="KW-0472">Membrane</keyword>
<keyword id="KW-0812">Transmembrane</keyword>
<keyword id="KW-1133">Transmembrane helix</keyword>
<keyword id="KW-0813">Transport</keyword>
<reference key="1">
    <citation type="submission" date="2008-10" db="EMBL/GenBank/DDBJ databases">
        <title>Genome sequence of Bacillus cereus AH820.</title>
        <authorList>
            <person name="Dodson R.J."/>
            <person name="Durkin A.S."/>
            <person name="Rosovitz M.J."/>
            <person name="Rasko D.A."/>
            <person name="Hoffmaster A."/>
            <person name="Ravel J."/>
            <person name="Sutton G."/>
        </authorList>
    </citation>
    <scope>NUCLEOTIDE SEQUENCE [LARGE SCALE GENOMIC DNA]</scope>
    <source>
        <strain>AH820</strain>
    </source>
</reference>
<dbReference type="EMBL" id="CP001283">
    <property type="protein sequence ID" value="ACK89319.1"/>
    <property type="molecule type" value="Genomic_DNA"/>
</dbReference>
<dbReference type="RefSeq" id="WP_001142616.1">
    <property type="nucleotide sequence ID" value="NC_011773.1"/>
</dbReference>
<dbReference type="SMR" id="B7JGN4"/>
<dbReference type="GeneID" id="45025139"/>
<dbReference type="KEGG" id="bcu:BCAH820_5400"/>
<dbReference type="HOGENOM" id="CLU_079215_4_2_9"/>
<dbReference type="Proteomes" id="UP000001363">
    <property type="component" value="Chromosome"/>
</dbReference>
<dbReference type="GO" id="GO:0005886">
    <property type="term" value="C:plasma membrane"/>
    <property type="evidence" value="ECO:0007669"/>
    <property type="project" value="UniProtKB-SubCell"/>
</dbReference>
<dbReference type="GO" id="GO:0045259">
    <property type="term" value="C:proton-transporting ATP synthase complex"/>
    <property type="evidence" value="ECO:0007669"/>
    <property type="project" value="UniProtKB-KW"/>
</dbReference>
<dbReference type="GO" id="GO:0046933">
    <property type="term" value="F:proton-transporting ATP synthase activity, rotational mechanism"/>
    <property type="evidence" value="ECO:0007669"/>
    <property type="project" value="UniProtKB-UniRule"/>
</dbReference>
<dbReference type="GO" id="GO:0046961">
    <property type="term" value="F:proton-transporting ATPase activity, rotational mechanism"/>
    <property type="evidence" value="ECO:0007669"/>
    <property type="project" value="TreeGrafter"/>
</dbReference>
<dbReference type="CDD" id="cd06503">
    <property type="entry name" value="ATP-synt_Fo_b"/>
    <property type="match status" value="1"/>
</dbReference>
<dbReference type="Gene3D" id="6.10.250.1580">
    <property type="match status" value="1"/>
</dbReference>
<dbReference type="HAMAP" id="MF_01398">
    <property type="entry name" value="ATP_synth_b_bprime"/>
    <property type="match status" value="1"/>
</dbReference>
<dbReference type="InterPro" id="IPR028987">
    <property type="entry name" value="ATP_synth_B-like_membr_sf"/>
</dbReference>
<dbReference type="InterPro" id="IPR002146">
    <property type="entry name" value="ATP_synth_b/b'su_bac/chlpt"/>
</dbReference>
<dbReference type="InterPro" id="IPR005864">
    <property type="entry name" value="ATP_synth_F0_bsu_bac"/>
</dbReference>
<dbReference type="InterPro" id="IPR050059">
    <property type="entry name" value="ATP_synthase_B_chain"/>
</dbReference>
<dbReference type="NCBIfam" id="TIGR01144">
    <property type="entry name" value="ATP_synt_b"/>
    <property type="match status" value="1"/>
</dbReference>
<dbReference type="PANTHER" id="PTHR33445:SF1">
    <property type="entry name" value="ATP SYNTHASE SUBUNIT B"/>
    <property type="match status" value="1"/>
</dbReference>
<dbReference type="PANTHER" id="PTHR33445">
    <property type="entry name" value="ATP SYNTHASE SUBUNIT B', CHLOROPLASTIC"/>
    <property type="match status" value="1"/>
</dbReference>
<dbReference type="Pfam" id="PF00430">
    <property type="entry name" value="ATP-synt_B"/>
    <property type="match status" value="1"/>
</dbReference>
<dbReference type="SUPFAM" id="SSF81573">
    <property type="entry name" value="F1F0 ATP synthase subunit B, membrane domain"/>
    <property type="match status" value="1"/>
</dbReference>
<proteinExistence type="inferred from homology"/>
<name>ATPF_BACC0</name>
<gene>
    <name evidence="1" type="primary">atpF</name>
    <name type="ordered locus">BCAH820_5400</name>
</gene>